<organism>
    <name type="scientific">Drosophila melanogaster</name>
    <name type="common">Fruit fly</name>
    <dbReference type="NCBI Taxonomy" id="7227"/>
    <lineage>
        <taxon>Eukaryota</taxon>
        <taxon>Metazoa</taxon>
        <taxon>Ecdysozoa</taxon>
        <taxon>Arthropoda</taxon>
        <taxon>Hexapoda</taxon>
        <taxon>Insecta</taxon>
        <taxon>Pterygota</taxon>
        <taxon>Neoptera</taxon>
        <taxon>Endopterygota</taxon>
        <taxon>Diptera</taxon>
        <taxon>Brachycera</taxon>
        <taxon>Muscomorpha</taxon>
        <taxon>Ephydroidea</taxon>
        <taxon>Drosophilidae</taxon>
        <taxon>Drosophila</taxon>
        <taxon>Sophophora</taxon>
    </lineage>
</organism>
<gene>
    <name evidence="5 7" type="primary">Arc1</name>
    <name evidence="7" type="ORF">CG12505</name>
</gene>
<feature type="chain" id="PRO_0000443801" description="Activity-regulated cytoskeleton associated protein 1">
    <location>
        <begin position="1"/>
        <end position="254"/>
    </location>
</feature>
<feature type="strand" evidence="8">
    <location>
        <begin position="43"/>
        <end position="45"/>
    </location>
</feature>
<feature type="helix" evidence="8">
    <location>
        <begin position="58"/>
        <end position="75"/>
    </location>
</feature>
<feature type="helix" evidence="8">
    <location>
        <begin position="79"/>
        <end position="85"/>
    </location>
</feature>
<feature type="helix" evidence="8">
    <location>
        <begin position="86"/>
        <end position="89"/>
    </location>
</feature>
<feature type="helix" evidence="8">
    <location>
        <begin position="92"/>
        <end position="101"/>
    </location>
</feature>
<feature type="helix" evidence="8">
    <location>
        <begin position="102"/>
        <end position="104"/>
    </location>
</feature>
<feature type="helix" evidence="8">
    <location>
        <begin position="108"/>
        <end position="119"/>
    </location>
</feature>
<feature type="helix" evidence="10">
    <location>
        <begin position="125"/>
        <end position="134"/>
    </location>
</feature>
<feature type="strand" evidence="9">
    <location>
        <begin position="139"/>
        <end position="141"/>
    </location>
</feature>
<feature type="helix" evidence="10">
    <location>
        <begin position="143"/>
        <end position="154"/>
    </location>
</feature>
<feature type="helix" evidence="10">
    <location>
        <begin position="164"/>
        <end position="172"/>
    </location>
</feature>
<feature type="helix" evidence="10">
    <location>
        <begin position="177"/>
        <end position="180"/>
    </location>
</feature>
<feature type="helix" evidence="10">
    <location>
        <begin position="185"/>
        <end position="187"/>
    </location>
</feature>
<feature type="helix" evidence="10">
    <location>
        <begin position="191"/>
        <end position="203"/>
    </location>
</feature>
<feature type="turn" evidence="11">
    <location>
        <begin position="228"/>
        <end position="230"/>
    </location>
</feature>
<feature type="strand" evidence="11">
    <location>
        <begin position="233"/>
        <end position="235"/>
    </location>
</feature>
<feature type="helix" evidence="11">
    <location>
        <begin position="241"/>
        <end position="244"/>
    </location>
</feature>
<feature type="strand" evidence="11">
    <location>
        <begin position="245"/>
        <end position="247"/>
    </location>
</feature>
<dbReference type="EMBL" id="AE013599">
    <property type="protein sequence ID" value="AAF58256.1"/>
    <property type="molecule type" value="Genomic_DNA"/>
</dbReference>
<dbReference type="EMBL" id="AY061464">
    <property type="protein sequence ID" value="AAL29012.1"/>
    <property type="molecule type" value="mRNA"/>
</dbReference>
<dbReference type="RefSeq" id="NP_610955.1">
    <property type="nucleotide sequence ID" value="NM_137111.3"/>
</dbReference>
<dbReference type="PDB" id="6S7X">
    <property type="method" value="X-ray"/>
    <property type="resolution" value="1.70 A"/>
    <property type="chains" value="A/B=39-205"/>
</dbReference>
<dbReference type="PDB" id="6S7Y">
    <property type="method" value="X-ray"/>
    <property type="resolution" value="2.30 A"/>
    <property type="chains" value="A/B=39-205"/>
</dbReference>
<dbReference type="PDB" id="6SID">
    <property type="method" value="X-ray"/>
    <property type="resolution" value="1.05 A"/>
    <property type="chains" value="A=123-208"/>
</dbReference>
<dbReference type="PDB" id="6TAP">
    <property type="method" value="EM"/>
    <property type="resolution" value="3.50 A"/>
    <property type="chains" value="A/B/C/D/E=1-254"/>
</dbReference>
<dbReference type="PDB" id="6TAR">
    <property type="method" value="EM"/>
    <property type="resolution" value="2.80 A"/>
    <property type="chains" value="A/B/C/D/E=1-254"/>
</dbReference>
<dbReference type="PDB" id="6TAS">
    <property type="method" value="EM"/>
    <property type="resolution" value="2.75 A"/>
    <property type="chains" value="A/B/C/D/E/F/G/H=1-254"/>
</dbReference>
<dbReference type="PDBsum" id="6S7X"/>
<dbReference type="PDBsum" id="6S7Y"/>
<dbReference type="PDBsum" id="6SID"/>
<dbReference type="PDBsum" id="6TAP"/>
<dbReference type="PDBsum" id="6TAR"/>
<dbReference type="PDBsum" id="6TAS"/>
<dbReference type="EMDB" id="EMD-10423"/>
<dbReference type="EMDB" id="EMD-10425"/>
<dbReference type="EMDB" id="EMD-10426"/>
<dbReference type="SMR" id="Q7K1U0"/>
<dbReference type="DIP" id="DIP-20738N"/>
<dbReference type="IntAct" id="Q7K1U0">
    <property type="interactions" value="27"/>
</dbReference>
<dbReference type="STRING" id="7227.FBpp0086687"/>
<dbReference type="PaxDb" id="7227-FBpp0086687"/>
<dbReference type="DNASU" id="36595"/>
<dbReference type="EnsemblMetazoa" id="FBtr0087560">
    <property type="protein sequence ID" value="FBpp0086687"/>
    <property type="gene ID" value="FBgn0033926"/>
</dbReference>
<dbReference type="GeneID" id="36595"/>
<dbReference type="KEGG" id="dme:Dmel_CG12505"/>
<dbReference type="UCSC" id="CG12505-RA">
    <property type="organism name" value="d. melanogaster"/>
</dbReference>
<dbReference type="AGR" id="FB:FBgn0033926"/>
<dbReference type="CTD" id="36595"/>
<dbReference type="FlyBase" id="FBgn0033926">
    <property type="gene designation" value="Arc1"/>
</dbReference>
<dbReference type="VEuPathDB" id="VectorBase:FBgn0033926"/>
<dbReference type="eggNOG" id="ENOG502SQYT">
    <property type="taxonomic scope" value="Eukaryota"/>
</dbReference>
<dbReference type="GeneTree" id="ENSGT00540000073579"/>
<dbReference type="HOGENOM" id="CLU_097305_0_0_1"/>
<dbReference type="InParanoid" id="Q7K1U0"/>
<dbReference type="OMA" id="YRKHITR"/>
<dbReference type="OrthoDB" id="425619at2759"/>
<dbReference type="PhylomeDB" id="Q7K1U0"/>
<dbReference type="SignaLink" id="Q7K1U0"/>
<dbReference type="BioGRID-ORCS" id="36595">
    <property type="hits" value="1 hit in 1 CRISPR screen"/>
</dbReference>
<dbReference type="ChiTaRS" id="Arc1">
    <property type="organism name" value="fly"/>
</dbReference>
<dbReference type="GenomeRNAi" id="36595"/>
<dbReference type="PRO" id="PR:Q7K1U0"/>
<dbReference type="Proteomes" id="UP000000803">
    <property type="component" value="Chromosome 2R"/>
</dbReference>
<dbReference type="Bgee" id="FBgn0033926">
    <property type="expression patterns" value="Expressed in adult tracheocyte (Drosophila) in open tracheal system trachea and 213 other cell types or tissues"/>
</dbReference>
<dbReference type="GO" id="GO:1903561">
    <property type="term" value="C:extracellular vesicle"/>
    <property type="evidence" value="ECO:0000314"/>
    <property type="project" value="UniProtKB"/>
</dbReference>
<dbReference type="GO" id="GO:0016020">
    <property type="term" value="C:membrane"/>
    <property type="evidence" value="ECO:0007669"/>
    <property type="project" value="UniProtKB-KW"/>
</dbReference>
<dbReference type="GO" id="GO:0098975">
    <property type="term" value="C:postsynapse of neuromuscular junction"/>
    <property type="evidence" value="ECO:0000314"/>
    <property type="project" value="UniProtKB"/>
</dbReference>
<dbReference type="GO" id="GO:0030017">
    <property type="term" value="C:sarcomere"/>
    <property type="evidence" value="ECO:0000314"/>
    <property type="project" value="FlyBase"/>
</dbReference>
<dbReference type="GO" id="GO:0045202">
    <property type="term" value="C:synapse"/>
    <property type="evidence" value="ECO:0000314"/>
    <property type="project" value="FlyBase"/>
</dbReference>
<dbReference type="GO" id="GO:0170047">
    <property type="term" value="C:virus-like capsid"/>
    <property type="evidence" value="ECO:0000314"/>
    <property type="project" value="FlyBase"/>
</dbReference>
<dbReference type="GO" id="GO:0042802">
    <property type="term" value="F:identical protein binding"/>
    <property type="evidence" value="ECO:0000353"/>
    <property type="project" value="IntAct"/>
</dbReference>
<dbReference type="GO" id="GO:0003729">
    <property type="term" value="F:mRNA binding"/>
    <property type="evidence" value="ECO:0000314"/>
    <property type="project" value="UniProtKB"/>
</dbReference>
<dbReference type="GO" id="GO:0005198">
    <property type="term" value="F:structural molecule activity"/>
    <property type="evidence" value="ECO:0000314"/>
    <property type="project" value="FlyBase"/>
</dbReference>
<dbReference type="GO" id="GO:0042595">
    <property type="term" value="P:behavioral response to starvation"/>
    <property type="evidence" value="ECO:0000314"/>
    <property type="project" value="FlyBase"/>
</dbReference>
<dbReference type="GO" id="GO:0051028">
    <property type="term" value="P:mRNA transport"/>
    <property type="evidence" value="ECO:0000314"/>
    <property type="project" value="UniProtKB"/>
</dbReference>
<dbReference type="GO" id="GO:0003012">
    <property type="term" value="P:muscle system process"/>
    <property type="evidence" value="ECO:0000316"/>
    <property type="project" value="FlyBase"/>
</dbReference>
<dbReference type="GO" id="GO:0048168">
    <property type="term" value="P:regulation of neuronal synaptic plasticity"/>
    <property type="evidence" value="ECO:0000314"/>
    <property type="project" value="UniProtKB"/>
</dbReference>
<dbReference type="GO" id="GO:0110077">
    <property type="term" value="P:vesicle-mediated intercellular transport"/>
    <property type="evidence" value="ECO:0000314"/>
    <property type="project" value="UniProtKB"/>
</dbReference>
<protein>
    <recommendedName>
        <fullName evidence="5">Activity-regulated cytoskeleton associated protein 1</fullName>
        <shortName evidence="5">dArc1</shortName>
    </recommendedName>
</protein>
<evidence type="ECO:0000250" key="1">
    <source>
        <dbReference type="UniProtKB" id="Q63053"/>
    </source>
</evidence>
<evidence type="ECO:0000269" key="2">
    <source>
    </source>
</evidence>
<evidence type="ECO:0000269" key="3">
    <source>
    </source>
</evidence>
<evidence type="ECO:0000269" key="4">
    <source>
    </source>
</evidence>
<evidence type="ECO:0000303" key="5">
    <source>
    </source>
</evidence>
<evidence type="ECO:0000305" key="6"/>
<evidence type="ECO:0000312" key="7">
    <source>
        <dbReference type="FlyBase" id="FBgn0033926"/>
    </source>
</evidence>
<evidence type="ECO:0007829" key="8">
    <source>
        <dbReference type="PDB" id="6S7X"/>
    </source>
</evidence>
<evidence type="ECO:0007829" key="9">
    <source>
        <dbReference type="PDB" id="6S7Y"/>
    </source>
</evidence>
<evidence type="ECO:0007829" key="10">
    <source>
        <dbReference type="PDB" id="6SID"/>
    </source>
</evidence>
<evidence type="ECO:0007829" key="11">
    <source>
        <dbReference type="PDB" id="6TAS"/>
    </source>
</evidence>
<comment type="function">
    <text evidence="2 3">Master regulator of synaptic plasticity that self-assembles into virion-like capsids that encapsulate RNAs and mediate intercellular RNA transfer from motorneurons to muscles (PubMed:29328915). Arc1 protein is released from motorneurons in extracellular vesicles that mediate the transfer of Arc1 mRNA into muscle cells, where Arc1 mRNA can undergo activity-dependent translation (PubMed:29328915). Intercellular transfer od Arc1 mRNA is required for synaptic plasticity at the neuromuscular junction (PubMed:29328915). May play a role in energy balance: required for regulation of body fat by a specific population of brain neurons, named E347, that are necessary and sufficient for proper body fat storage (PubMed:26209258).</text>
</comment>
<comment type="subunit">
    <text evidence="1">Homooligomer; homooligomerizes into virion-like capsids.</text>
</comment>
<comment type="interaction">
    <interactant intactId="EBI-103780">
        <id>Q7K1U0</id>
    </interactant>
    <interactant intactId="EBI-103780">
        <id>Q7K1U0</id>
        <label>Arc1</label>
    </interactant>
    <organismsDiffer>false</organismsDiffer>
    <experiments>4</experiments>
</comment>
<comment type="interaction">
    <interactant intactId="EBI-103780">
        <id>Q7K1U0</id>
    </interactant>
    <interactant intactId="EBI-172533">
        <id>Q7JV70</id>
        <label>Arc2</label>
    </interactant>
    <organismsDiffer>false</organismsDiffer>
    <experiments>5</experiments>
</comment>
<comment type="subcellular location">
    <subcellularLocation>
        <location evidence="3">Extracellular vesicle membrane</location>
    </subcellularLocation>
    <subcellularLocation>
        <location evidence="3">Synapse</location>
    </subcellularLocation>
    <text evidence="3">Forms virion-like extracellular vesicles that are released from neurons (PubMed:29328915). Present at pre- and postsynaptic sites of the neuromuscular junction (PubMed:29328915).</text>
</comment>
<comment type="tissue specificity">
    <text evidence="2">Expressed in a specific population of brain neurons, named E347, that are necessary and sufficient for proper body fat storage.</text>
</comment>
<comment type="induction">
    <text evidence="2">Up-regulated following stimulation of E347 brain neurons.</text>
</comment>
<comment type="domain">
    <text evidence="3 4">The protein is evolutionarily related to retrotransposon Gag proteins (PubMed:29328915, PubMed:29328916). It contains structural elements found within viral Gag polyproteins originated from the Ty3/gypsy retrotransposon family and retains the ability to form virion-like capsid structures that can mediate mRNA transfer between cells (PubMed:29328915, PubMed:29328916). Tetrapod and fly Arc protein-coding genes originated independently from distinct lineages of Ty3/gypsy retrotransposons (PubMed:29328916).</text>
</comment>
<comment type="disruption phenotype">
    <text evidence="3">Strong reduction in the number of synaptic boutons at neuromuscular junction in third-instar larvae.</text>
</comment>
<comment type="similarity">
    <text evidence="6">Belongs to the ARC/ARG3.1 family.</text>
</comment>
<proteinExistence type="evidence at protein level"/>
<name>ARC1_DROME</name>
<keyword id="KW-0002">3D-structure</keyword>
<keyword id="KW-0472">Membrane</keyword>
<keyword id="KW-1185">Reference proteome</keyword>
<keyword id="KW-0694">RNA-binding</keyword>
<keyword id="KW-0770">Synapse</keyword>
<keyword id="KW-0813">Transport</keyword>
<sequence>MAQLTQMTNEQLRELIEAVRAAAVGAAGSAAAAGGADASRGKGNFSACTHSFGGTRDHDVVEEFIGNIETYKDVEGISDENALKGISLLFYGMASTWWQGVRKEATTWKEAIALIREHFSPTKPAYQIYMEFFQNKQDDHDPIDTFVIQKRALLAQLPSGRHDEETELDLLFGLLNIKYRKHISRHSVHTFKDLLEQGRIIEHNNQEDEEQLATAKNTRGSKRTTRCTYCSFRGHTFDNCRKRQKDRQEEQHEE</sequence>
<reference key="1">
    <citation type="journal article" date="2000" name="Science">
        <title>The genome sequence of Drosophila melanogaster.</title>
        <authorList>
            <person name="Adams M.D."/>
            <person name="Celniker S.E."/>
            <person name="Holt R.A."/>
            <person name="Evans C.A."/>
            <person name="Gocayne J.D."/>
            <person name="Amanatides P.G."/>
            <person name="Scherer S.E."/>
            <person name="Li P.W."/>
            <person name="Hoskins R.A."/>
            <person name="Galle R.F."/>
            <person name="George R.A."/>
            <person name="Lewis S.E."/>
            <person name="Richards S."/>
            <person name="Ashburner M."/>
            <person name="Henderson S.N."/>
            <person name="Sutton G.G."/>
            <person name="Wortman J.R."/>
            <person name="Yandell M.D."/>
            <person name="Zhang Q."/>
            <person name="Chen L.X."/>
            <person name="Brandon R.C."/>
            <person name="Rogers Y.-H.C."/>
            <person name="Blazej R.G."/>
            <person name="Champe M."/>
            <person name="Pfeiffer B.D."/>
            <person name="Wan K.H."/>
            <person name="Doyle C."/>
            <person name="Baxter E.G."/>
            <person name="Helt G."/>
            <person name="Nelson C.R."/>
            <person name="Miklos G.L.G."/>
            <person name="Abril J.F."/>
            <person name="Agbayani A."/>
            <person name="An H.-J."/>
            <person name="Andrews-Pfannkoch C."/>
            <person name="Baldwin D."/>
            <person name="Ballew R.M."/>
            <person name="Basu A."/>
            <person name="Baxendale J."/>
            <person name="Bayraktaroglu L."/>
            <person name="Beasley E.M."/>
            <person name="Beeson K.Y."/>
            <person name="Benos P.V."/>
            <person name="Berman B.P."/>
            <person name="Bhandari D."/>
            <person name="Bolshakov S."/>
            <person name="Borkova D."/>
            <person name="Botchan M.R."/>
            <person name="Bouck J."/>
            <person name="Brokstein P."/>
            <person name="Brottier P."/>
            <person name="Burtis K.C."/>
            <person name="Busam D.A."/>
            <person name="Butler H."/>
            <person name="Cadieu E."/>
            <person name="Center A."/>
            <person name="Chandra I."/>
            <person name="Cherry J.M."/>
            <person name="Cawley S."/>
            <person name="Dahlke C."/>
            <person name="Davenport L.B."/>
            <person name="Davies P."/>
            <person name="de Pablos B."/>
            <person name="Delcher A."/>
            <person name="Deng Z."/>
            <person name="Mays A.D."/>
            <person name="Dew I."/>
            <person name="Dietz S.M."/>
            <person name="Dodson K."/>
            <person name="Doup L.E."/>
            <person name="Downes M."/>
            <person name="Dugan-Rocha S."/>
            <person name="Dunkov B.C."/>
            <person name="Dunn P."/>
            <person name="Durbin K.J."/>
            <person name="Evangelista C.C."/>
            <person name="Ferraz C."/>
            <person name="Ferriera S."/>
            <person name="Fleischmann W."/>
            <person name="Fosler C."/>
            <person name="Gabrielian A.E."/>
            <person name="Garg N.S."/>
            <person name="Gelbart W.M."/>
            <person name="Glasser K."/>
            <person name="Glodek A."/>
            <person name="Gong F."/>
            <person name="Gorrell J.H."/>
            <person name="Gu Z."/>
            <person name="Guan P."/>
            <person name="Harris M."/>
            <person name="Harris N.L."/>
            <person name="Harvey D.A."/>
            <person name="Heiman T.J."/>
            <person name="Hernandez J.R."/>
            <person name="Houck J."/>
            <person name="Hostin D."/>
            <person name="Houston K.A."/>
            <person name="Howland T.J."/>
            <person name="Wei M.-H."/>
            <person name="Ibegwam C."/>
            <person name="Jalali M."/>
            <person name="Kalush F."/>
            <person name="Karpen G.H."/>
            <person name="Ke Z."/>
            <person name="Kennison J.A."/>
            <person name="Ketchum K.A."/>
            <person name="Kimmel B.E."/>
            <person name="Kodira C.D."/>
            <person name="Kraft C.L."/>
            <person name="Kravitz S."/>
            <person name="Kulp D."/>
            <person name="Lai Z."/>
            <person name="Lasko P."/>
            <person name="Lei Y."/>
            <person name="Levitsky A.A."/>
            <person name="Li J.H."/>
            <person name="Li Z."/>
            <person name="Liang Y."/>
            <person name="Lin X."/>
            <person name="Liu X."/>
            <person name="Mattei B."/>
            <person name="McIntosh T.C."/>
            <person name="McLeod M.P."/>
            <person name="McPherson D."/>
            <person name="Merkulov G."/>
            <person name="Milshina N.V."/>
            <person name="Mobarry C."/>
            <person name="Morris J."/>
            <person name="Moshrefi A."/>
            <person name="Mount S.M."/>
            <person name="Moy M."/>
            <person name="Murphy B."/>
            <person name="Murphy L."/>
            <person name="Muzny D.M."/>
            <person name="Nelson D.L."/>
            <person name="Nelson D.R."/>
            <person name="Nelson K.A."/>
            <person name="Nixon K."/>
            <person name="Nusskern D.R."/>
            <person name="Pacleb J.M."/>
            <person name="Palazzolo M."/>
            <person name="Pittman G.S."/>
            <person name="Pan S."/>
            <person name="Pollard J."/>
            <person name="Puri V."/>
            <person name="Reese M.G."/>
            <person name="Reinert K."/>
            <person name="Remington K."/>
            <person name="Saunders R.D.C."/>
            <person name="Scheeler F."/>
            <person name="Shen H."/>
            <person name="Shue B.C."/>
            <person name="Siden-Kiamos I."/>
            <person name="Simpson M."/>
            <person name="Skupski M.P."/>
            <person name="Smith T.J."/>
            <person name="Spier E."/>
            <person name="Spradling A.C."/>
            <person name="Stapleton M."/>
            <person name="Strong R."/>
            <person name="Sun E."/>
            <person name="Svirskas R."/>
            <person name="Tector C."/>
            <person name="Turner R."/>
            <person name="Venter E."/>
            <person name="Wang A.H."/>
            <person name="Wang X."/>
            <person name="Wang Z.-Y."/>
            <person name="Wassarman D.A."/>
            <person name="Weinstock G.M."/>
            <person name="Weissenbach J."/>
            <person name="Williams S.M."/>
            <person name="Woodage T."/>
            <person name="Worley K.C."/>
            <person name="Wu D."/>
            <person name="Yang S."/>
            <person name="Yao Q.A."/>
            <person name="Ye J."/>
            <person name="Yeh R.-F."/>
            <person name="Zaveri J.S."/>
            <person name="Zhan M."/>
            <person name="Zhang G."/>
            <person name="Zhao Q."/>
            <person name="Zheng L."/>
            <person name="Zheng X.H."/>
            <person name="Zhong F.N."/>
            <person name="Zhong W."/>
            <person name="Zhou X."/>
            <person name="Zhu S.C."/>
            <person name="Zhu X."/>
            <person name="Smith H.O."/>
            <person name="Gibbs R.A."/>
            <person name="Myers E.W."/>
            <person name="Rubin G.M."/>
            <person name="Venter J.C."/>
        </authorList>
    </citation>
    <scope>NUCLEOTIDE SEQUENCE [LARGE SCALE GENOMIC DNA]</scope>
    <source>
        <strain>Berkeley</strain>
    </source>
</reference>
<reference key="2">
    <citation type="journal article" date="2002" name="Genome Biol.">
        <title>Annotation of the Drosophila melanogaster euchromatic genome: a systematic review.</title>
        <authorList>
            <person name="Misra S."/>
            <person name="Crosby M.A."/>
            <person name="Mungall C.J."/>
            <person name="Matthews B.B."/>
            <person name="Campbell K.S."/>
            <person name="Hradecky P."/>
            <person name="Huang Y."/>
            <person name="Kaminker J.S."/>
            <person name="Millburn G.H."/>
            <person name="Prochnik S.E."/>
            <person name="Smith C.D."/>
            <person name="Tupy J.L."/>
            <person name="Whitfield E.J."/>
            <person name="Bayraktaroglu L."/>
            <person name="Berman B.P."/>
            <person name="Bettencourt B.R."/>
            <person name="Celniker S.E."/>
            <person name="de Grey A.D.N.J."/>
            <person name="Drysdale R.A."/>
            <person name="Harris N.L."/>
            <person name="Richter J."/>
            <person name="Russo S."/>
            <person name="Schroeder A.J."/>
            <person name="Shu S.Q."/>
            <person name="Stapleton M."/>
            <person name="Yamada C."/>
            <person name="Ashburner M."/>
            <person name="Gelbart W.M."/>
            <person name="Rubin G.M."/>
            <person name="Lewis S.E."/>
        </authorList>
    </citation>
    <scope>GENOME REANNOTATION</scope>
    <source>
        <strain>Berkeley</strain>
    </source>
</reference>
<reference key="3">
    <citation type="journal article" date="2002" name="Genome Biol.">
        <title>A Drosophila full-length cDNA resource.</title>
        <authorList>
            <person name="Stapleton M."/>
            <person name="Carlson J.W."/>
            <person name="Brokstein P."/>
            <person name="Yu C."/>
            <person name="Champe M."/>
            <person name="George R.A."/>
            <person name="Guarin H."/>
            <person name="Kronmiller B."/>
            <person name="Pacleb J.M."/>
            <person name="Park S."/>
            <person name="Wan K.H."/>
            <person name="Rubin G.M."/>
            <person name="Celniker S.E."/>
        </authorList>
    </citation>
    <scope>NUCLEOTIDE SEQUENCE [LARGE SCALE MRNA]</scope>
    <source>
        <strain>Berkeley</strain>
        <tissue>Embryo</tissue>
    </source>
</reference>
<reference key="4">
    <citation type="journal article" date="2015" name="Dev. Biol.">
        <title>Coordination between Drosophila Arc1 and a specific population of brain neurons regulates organismal fat.</title>
        <authorList>
            <person name="Mosher J."/>
            <person name="Zhang W."/>
            <person name="Blumhagen R.Z."/>
            <person name="D'Alessandro A."/>
            <person name="Nemkov T."/>
            <person name="Hansen K.C."/>
            <person name="Hesselberth J.R."/>
            <person name="Reis T."/>
        </authorList>
    </citation>
    <scope>FUNCTION</scope>
    <scope>TISSUE SPECIFICITY</scope>
    <scope>INDUCTION</scope>
</reference>
<reference key="5">
    <citation type="journal article" date="2018" name="Cell">
        <title>Retrovirus-like Gag protein Arc1 binds RNA and traffics across synaptic boutons.</title>
        <authorList>
            <person name="Ashley J."/>
            <person name="Cordy B."/>
            <person name="Lucia D."/>
            <person name="Fradkin L.G."/>
            <person name="Budnik V."/>
            <person name="Thomson T."/>
        </authorList>
    </citation>
    <scope>FUNCTION</scope>
    <scope>SUBCELLULAR LOCATION</scope>
    <scope>DOMAIN</scope>
    <scope>RNA-BINDING</scope>
    <scope>DISRUPTION PHENOTYPE</scope>
</reference>
<reference key="6">
    <citation type="journal article" date="2018" name="Cell">
        <title>The neuronal gene Arc encodes a repurposed retrotransposon Gag protein that mediates intercellular RNA transfer.</title>
        <authorList>
            <person name="Pastuzyn E.D."/>
            <person name="Day C.E."/>
            <person name="Kearns R.B."/>
            <person name="Kyrke-Smith M."/>
            <person name="Taibi A.V."/>
            <person name="McCormick J."/>
            <person name="Yoder N."/>
            <person name="Belnap D.M."/>
            <person name="Erlendsson S."/>
            <person name="Morado D.R."/>
            <person name="Briggs J.A.G."/>
            <person name="Feschotte C."/>
            <person name="Shepherd J.D."/>
        </authorList>
    </citation>
    <scope>DOMAIN</scope>
</reference>
<accession>Q7K1U0</accession>